<sequence>MASLKKSLFLVLFLGLLSLSICEEQKRENEEDAEDENHEEESEEKRGLLDFAKHVIGIASKLGKRSEEKRFWPFMGKRSEEKRFWPFMGKRSEEKRFFRVLAKLGKLAK</sequence>
<protein>
    <recommendedName>
        <fullName evidence="6 8">Preprofallaxidin-8</fullName>
    </recommendedName>
    <component>
        <recommendedName>
            <fullName>Fallaxidin-2.1</fullName>
        </recommendedName>
    </component>
    <component>
        <recommendedName>
            <fullName>Fallaxidin-3.2</fullName>
        </recommendedName>
    </component>
    <component>
        <recommendedName>
            <fullName>Fallaxidin-5.2</fullName>
        </recommendedName>
    </component>
</protein>
<evidence type="ECO:0000250" key="1"/>
<evidence type="ECO:0000250" key="2">
    <source>
        <dbReference type="UniProtKB" id="P82881"/>
    </source>
</evidence>
<evidence type="ECO:0000255" key="3"/>
<evidence type="ECO:0000256" key="4">
    <source>
        <dbReference type="SAM" id="MobiDB-lite"/>
    </source>
</evidence>
<evidence type="ECO:0000269" key="5">
    <source>
    </source>
</evidence>
<evidence type="ECO:0000303" key="6">
    <source>
    </source>
</evidence>
<evidence type="ECO:0000305" key="7"/>
<evidence type="ECO:0000312" key="8">
    <source>
        <dbReference type="EMBL" id="ACH53453.1"/>
    </source>
</evidence>
<keyword id="KW-0027">Amidation</keyword>
<keyword id="KW-0878">Amphibian defense peptide</keyword>
<keyword id="KW-0044">Antibiotic</keyword>
<keyword id="KW-0929">Antimicrobial</keyword>
<keyword id="KW-0903">Direct protein sequencing</keyword>
<keyword id="KW-0964">Secreted</keyword>
<keyword id="KW-0732">Signal</keyword>
<name>FALX8_LITFA</name>
<reference evidence="7 8" key="1">
    <citation type="journal article" date="2008" name="Rapid Commun. Mass Spectrom.">
        <title>The fallaxidin peptides from the skin secretion of the eastern dwarf tree frog Litoria fallax. Sequence determination by positive and negative ion electrospray mass spectrometry: antimicrobial activity and cDNA cloning of the fallaxidins.</title>
        <authorList>
            <person name="Jackway R.J."/>
            <person name="Bowie J.H."/>
            <person name="Bilusich D."/>
            <person name="Musgrave I.F."/>
            <person name="Surinya-Johnson K.H."/>
            <person name="Tyler M.J."/>
            <person name="Eichinger P.C.H."/>
        </authorList>
    </citation>
    <scope>NUCLEOTIDE SEQUENCE [MRNA]</scope>
    <scope>PROTEIN SEQUENCE OF 47-62; 71-75 AND 84-88</scope>
    <scope>FUNCTION</scope>
    <scope>SUBCELLULAR LOCATION</scope>
    <scope>TISSUE SPECIFICITY</scope>
    <scope>MASS SPECTROMETRY</scope>
    <scope>AMIDATION AT LEU-62; MET-75 AND MET-88</scope>
    <source>
        <tissue evidence="8">Skin</tissue>
        <tissue evidence="5">Skin secretion</tissue>
    </source>
</reference>
<proteinExistence type="evidence at protein level"/>
<feature type="signal peptide" evidence="3 8">
    <location>
        <begin position="1"/>
        <end position="22"/>
    </location>
</feature>
<feature type="propeptide" id="PRO_0000361742" evidence="5">
    <location>
        <begin position="23"/>
        <end position="46"/>
    </location>
</feature>
<feature type="peptide" id="PRO_0000361743" description="Fallaxidin-3.2">
    <location>
        <begin position="47"/>
        <end position="62"/>
    </location>
</feature>
<feature type="propeptide" id="PRO_0000361744" evidence="5">
    <location>
        <begin position="66"/>
        <end position="70"/>
    </location>
</feature>
<feature type="peptide" id="PRO_0000361745" description="Fallaxidin-2.1">
    <location>
        <begin position="71"/>
        <end position="75"/>
    </location>
</feature>
<feature type="propeptide" id="PRO_0000361746" evidence="5">
    <location>
        <begin position="79"/>
        <end position="83"/>
    </location>
</feature>
<feature type="peptide" id="PRO_0000361747" description="Fallaxidin-2.1">
    <location>
        <begin position="84"/>
        <end position="88"/>
    </location>
</feature>
<feature type="propeptide" id="PRO_0000361748" evidence="5">
    <location>
        <begin position="92"/>
        <end position="96"/>
    </location>
</feature>
<feature type="peptide" id="PRO_0000361749" description="Fallaxidin-5.2" evidence="1">
    <location>
        <begin position="97"/>
        <end position="108"/>
    </location>
</feature>
<feature type="propeptide" id="PRO_0000361750" evidence="2">
    <location>
        <position position="108"/>
    </location>
</feature>
<feature type="region of interest" description="Disordered" evidence="4">
    <location>
        <begin position="27"/>
        <end position="46"/>
    </location>
</feature>
<feature type="compositionally biased region" description="Acidic residues" evidence="4">
    <location>
        <begin position="30"/>
        <end position="42"/>
    </location>
</feature>
<feature type="modified residue" description="Leucine amide" evidence="5">
    <location>
        <position position="62"/>
    </location>
</feature>
<feature type="modified residue" description="Methionine amide" evidence="5">
    <location>
        <position position="75"/>
    </location>
</feature>
<feature type="modified residue" description="Methionine amide" evidence="5">
    <location>
        <position position="88"/>
    </location>
</feature>
<organism>
    <name type="scientific">Litoria fallax</name>
    <name type="common">Eastern dwarf tree frog</name>
    <name type="synonym">Hylomantis fallax</name>
    <dbReference type="NCBI Taxonomy" id="115422"/>
    <lineage>
        <taxon>Eukaryota</taxon>
        <taxon>Metazoa</taxon>
        <taxon>Chordata</taxon>
        <taxon>Craniata</taxon>
        <taxon>Vertebrata</taxon>
        <taxon>Euteleostomi</taxon>
        <taxon>Amphibia</taxon>
        <taxon>Batrachia</taxon>
        <taxon>Anura</taxon>
        <taxon>Neobatrachia</taxon>
        <taxon>Hyloidea</taxon>
        <taxon>Hylidae</taxon>
        <taxon>Pelodryadinae</taxon>
        <taxon>Litoria</taxon>
    </lineage>
</organism>
<accession>B5LUR0</accession>
<dbReference type="EMBL" id="EU912535">
    <property type="protein sequence ID" value="ACH53453.1"/>
    <property type="molecule type" value="mRNA"/>
</dbReference>
<dbReference type="GO" id="GO:0005576">
    <property type="term" value="C:extracellular region"/>
    <property type="evidence" value="ECO:0000314"/>
    <property type="project" value="UniProtKB"/>
</dbReference>
<dbReference type="GO" id="GO:0050830">
    <property type="term" value="P:defense response to Gram-positive bacterium"/>
    <property type="evidence" value="ECO:0000314"/>
    <property type="project" value="UniProtKB"/>
</dbReference>
<dbReference type="InterPro" id="IPR004275">
    <property type="entry name" value="Frog_antimicrobial_propeptide"/>
</dbReference>
<dbReference type="Pfam" id="PF03032">
    <property type="entry name" value="FSAP_sig_propep"/>
    <property type="match status" value="1"/>
</dbReference>
<comment type="function">
    <text evidence="5">Fallaxidin-2.1 shows no antibacterial activity against Gram-positive or Gram-negative bacteria. Does not inhibit the formation of NO by neuronal nitric oxide synthase. Has no effect on splenocyte proliferation or smooth muscle contraction.</text>
</comment>
<comment type="function">
    <text evidence="5">Fallaxidin-3.2 shows antibacterial activity against the Gram-positive bacteria E.faecalis (MIC=100 uM) and L.lactis (MIC=500 uM). No antibacterial activity against the Gram-positive bacteria B.cereus, L.innocua, M.luteus, S.epidermidis, S.uberis and S.aureus, or the Gram-negative bacteria E.cloacae and E.coli.</text>
</comment>
<comment type="subcellular location">
    <subcellularLocation>
        <location evidence="5">Secreted</location>
    </subcellularLocation>
</comment>
<comment type="tissue specificity">
    <text evidence="5">Expressed by the skin glands.</text>
</comment>
<comment type="mass spectrometry">
    <molecule>Fallaxidin-3.2</molecule>
    <text>The measured mass is that of Fallaxidin-3.2.</text>
</comment>
<comment type="mass spectrometry">
    <molecule>Fallaxidin-2.1</molecule>
    <text>The measured mass is that of Fallaxidin-2.1.</text>
</comment>
<comment type="similarity">
    <text evidence="3">Belongs to the frog skin active peptide (FSAP) family. Brevinin subfamily.</text>
</comment>